<sequence length="215" mass="25716">MRVRYKPWAEDYLKNHPDLVDMDGAHAGKMSEWFEKEQPIYIEIGSGMGQFITTLAAQYPEINFVSMEREKSVMYKVLDKTKEMGLKNLKMICNDAIELNEYFKDKEISRIYLNFSDPWPKKRHAKRRLTYHTYLALYKQILKDDGEIHFKTDNRGLFAFSIESMSQFGMYFTKMNLNLHDEDDEDNIVTEYEKKFSEKGSRIYRMEAKFHKCFE</sequence>
<feature type="chain" id="PRO_0000171394" description="tRNA (guanine-N(7)-)-methyltransferase">
    <location>
        <begin position="1"/>
        <end position="215"/>
    </location>
</feature>
<feature type="active site" evidence="1">
    <location>
        <position position="117"/>
    </location>
</feature>
<feature type="binding site" evidence="2">
    <location>
        <position position="43"/>
    </location>
    <ligand>
        <name>S-adenosyl-L-methionine</name>
        <dbReference type="ChEBI" id="CHEBI:59789"/>
    </ligand>
</feature>
<feature type="binding site" evidence="2">
    <location>
        <position position="68"/>
    </location>
    <ligand>
        <name>S-adenosyl-L-methionine</name>
        <dbReference type="ChEBI" id="CHEBI:59789"/>
    </ligand>
</feature>
<feature type="binding site" evidence="2">
    <location>
        <position position="95"/>
    </location>
    <ligand>
        <name>S-adenosyl-L-methionine</name>
        <dbReference type="ChEBI" id="CHEBI:59789"/>
    </ligand>
</feature>
<feature type="binding site" evidence="2">
    <location>
        <position position="117"/>
    </location>
    <ligand>
        <name>S-adenosyl-L-methionine</name>
        <dbReference type="ChEBI" id="CHEBI:59789"/>
    </ligand>
</feature>
<feature type="binding site" evidence="2">
    <location>
        <position position="121"/>
    </location>
    <ligand>
        <name>substrate</name>
    </ligand>
</feature>
<feature type="binding site" evidence="2">
    <location>
        <position position="153"/>
    </location>
    <ligand>
        <name>substrate</name>
    </ligand>
</feature>
<feature type="binding site" evidence="2">
    <location>
        <begin position="190"/>
        <end position="193"/>
    </location>
    <ligand>
        <name>substrate</name>
    </ligand>
</feature>
<keyword id="KW-0489">Methyltransferase</keyword>
<keyword id="KW-0949">S-adenosyl-L-methionine</keyword>
<keyword id="KW-0808">Transferase</keyword>
<keyword id="KW-0819">tRNA processing</keyword>
<reference key="1">
    <citation type="journal article" date="2003" name="Mol. Microbiol.">
        <title>Genome-based analysis of virulence genes in a non-biofilm-forming Staphylococcus epidermidis strain (ATCC 12228).</title>
        <authorList>
            <person name="Zhang Y.-Q."/>
            <person name="Ren S.-X."/>
            <person name="Li H.-L."/>
            <person name="Wang Y.-X."/>
            <person name="Fu G."/>
            <person name="Yang J."/>
            <person name="Qin Z.-Q."/>
            <person name="Miao Y.-G."/>
            <person name="Wang W.-Y."/>
            <person name="Chen R.-S."/>
            <person name="Shen Y."/>
            <person name="Chen Z."/>
            <person name="Yuan Z.-H."/>
            <person name="Zhao G.-P."/>
            <person name="Qu D."/>
            <person name="Danchin A."/>
            <person name="Wen Y.-M."/>
        </authorList>
    </citation>
    <scope>NUCLEOTIDE SEQUENCE [LARGE SCALE GENOMIC DNA]</scope>
    <source>
        <strain>ATCC 12228 / FDA PCI 1200</strain>
    </source>
</reference>
<comment type="function">
    <text evidence="2">Catalyzes the formation of N(7)-methylguanine at position 46 (m7G46) in tRNA.</text>
</comment>
<comment type="catalytic activity">
    <reaction evidence="2">
        <text>guanosine(46) in tRNA + S-adenosyl-L-methionine = N(7)-methylguanosine(46) in tRNA + S-adenosyl-L-homocysteine</text>
        <dbReference type="Rhea" id="RHEA:42708"/>
        <dbReference type="Rhea" id="RHEA-COMP:10188"/>
        <dbReference type="Rhea" id="RHEA-COMP:10189"/>
        <dbReference type="ChEBI" id="CHEBI:57856"/>
        <dbReference type="ChEBI" id="CHEBI:59789"/>
        <dbReference type="ChEBI" id="CHEBI:74269"/>
        <dbReference type="ChEBI" id="CHEBI:74480"/>
        <dbReference type="EC" id="2.1.1.33"/>
    </reaction>
</comment>
<comment type="pathway">
    <text evidence="2">tRNA modification; N(7)-methylguanine-tRNA biosynthesis.</text>
</comment>
<comment type="similarity">
    <text evidence="2">Belongs to the class I-like SAM-binding methyltransferase superfamily. TrmB family.</text>
</comment>
<name>TRMB_STAES</name>
<dbReference type="EC" id="2.1.1.33" evidence="2"/>
<dbReference type="EMBL" id="AE015929">
    <property type="protein sequence ID" value="AAO05020.1"/>
    <property type="molecule type" value="Genomic_DNA"/>
</dbReference>
<dbReference type="RefSeq" id="NP_764976.1">
    <property type="nucleotide sequence ID" value="NC_004461.1"/>
</dbReference>
<dbReference type="RefSeq" id="WP_002493957.1">
    <property type="nucleotide sequence ID" value="NZ_WBME01000009.1"/>
</dbReference>
<dbReference type="SMR" id="Q8CS43"/>
<dbReference type="GeneID" id="50018469"/>
<dbReference type="KEGG" id="sep:SE_1421"/>
<dbReference type="PATRIC" id="fig|176280.10.peg.1387"/>
<dbReference type="eggNOG" id="COG0220">
    <property type="taxonomic scope" value="Bacteria"/>
</dbReference>
<dbReference type="HOGENOM" id="CLU_050910_2_1_9"/>
<dbReference type="OrthoDB" id="9802090at2"/>
<dbReference type="UniPathway" id="UPA00989"/>
<dbReference type="Proteomes" id="UP000001411">
    <property type="component" value="Chromosome"/>
</dbReference>
<dbReference type="GO" id="GO:0043527">
    <property type="term" value="C:tRNA methyltransferase complex"/>
    <property type="evidence" value="ECO:0007669"/>
    <property type="project" value="TreeGrafter"/>
</dbReference>
<dbReference type="GO" id="GO:0008176">
    <property type="term" value="F:tRNA (guanine(46)-N7)-methyltransferase activity"/>
    <property type="evidence" value="ECO:0007669"/>
    <property type="project" value="UniProtKB-UniRule"/>
</dbReference>
<dbReference type="FunFam" id="3.40.50.150:FF:000035">
    <property type="entry name" value="tRNA (guanine-N(7)-)-methyltransferase"/>
    <property type="match status" value="1"/>
</dbReference>
<dbReference type="Gene3D" id="3.40.50.150">
    <property type="entry name" value="Vaccinia Virus protein VP39"/>
    <property type="match status" value="1"/>
</dbReference>
<dbReference type="HAMAP" id="MF_01057">
    <property type="entry name" value="tRNA_methyltr_TrmB"/>
    <property type="match status" value="1"/>
</dbReference>
<dbReference type="InterPro" id="IPR029063">
    <property type="entry name" value="SAM-dependent_MTases_sf"/>
</dbReference>
<dbReference type="InterPro" id="IPR003358">
    <property type="entry name" value="tRNA_(Gua-N-7)_MeTrfase_Trmb"/>
</dbReference>
<dbReference type="InterPro" id="IPR055361">
    <property type="entry name" value="tRNA_methyltr_TrmB_bact"/>
</dbReference>
<dbReference type="NCBIfam" id="NF001080">
    <property type="entry name" value="PRK00121.2-2"/>
    <property type="match status" value="1"/>
</dbReference>
<dbReference type="NCBIfam" id="TIGR00091">
    <property type="entry name" value="tRNA (guanosine(46)-N7)-methyltransferase TrmB"/>
    <property type="match status" value="1"/>
</dbReference>
<dbReference type="PANTHER" id="PTHR23417">
    <property type="entry name" value="3-DEOXY-D-MANNO-OCTULOSONIC-ACID TRANSFERASE/TRNA GUANINE-N 7 - -METHYLTRANSFERASE"/>
    <property type="match status" value="1"/>
</dbReference>
<dbReference type="PANTHER" id="PTHR23417:SF14">
    <property type="entry name" value="PENTACOTRIPEPTIDE-REPEAT REGION OF PRORP DOMAIN-CONTAINING PROTEIN"/>
    <property type="match status" value="1"/>
</dbReference>
<dbReference type="Pfam" id="PF02390">
    <property type="entry name" value="Methyltransf_4"/>
    <property type="match status" value="1"/>
</dbReference>
<dbReference type="SUPFAM" id="SSF53335">
    <property type="entry name" value="S-adenosyl-L-methionine-dependent methyltransferases"/>
    <property type="match status" value="1"/>
</dbReference>
<dbReference type="PROSITE" id="PS51625">
    <property type="entry name" value="SAM_MT_TRMB"/>
    <property type="match status" value="1"/>
</dbReference>
<evidence type="ECO:0000250" key="1"/>
<evidence type="ECO:0000255" key="2">
    <source>
        <dbReference type="HAMAP-Rule" id="MF_01057"/>
    </source>
</evidence>
<proteinExistence type="inferred from homology"/>
<accession>Q8CS43</accession>
<gene>
    <name evidence="2" type="primary">trmB</name>
    <name type="ordered locus">SE_1421</name>
</gene>
<organism>
    <name type="scientific">Staphylococcus epidermidis (strain ATCC 12228 / FDA PCI 1200)</name>
    <dbReference type="NCBI Taxonomy" id="176280"/>
    <lineage>
        <taxon>Bacteria</taxon>
        <taxon>Bacillati</taxon>
        <taxon>Bacillota</taxon>
        <taxon>Bacilli</taxon>
        <taxon>Bacillales</taxon>
        <taxon>Staphylococcaceae</taxon>
        <taxon>Staphylococcus</taxon>
    </lineage>
</organism>
<protein>
    <recommendedName>
        <fullName evidence="2">tRNA (guanine-N(7)-)-methyltransferase</fullName>
        <ecNumber evidence="2">2.1.1.33</ecNumber>
    </recommendedName>
    <alternativeName>
        <fullName evidence="2">tRNA (guanine(46)-N(7))-methyltransferase</fullName>
    </alternativeName>
    <alternativeName>
        <fullName evidence="2">tRNA(m7G46)-methyltransferase</fullName>
    </alternativeName>
</protein>